<sequence>MFEPFLLAVEGQEFLTGFHVEGPLAGLIIILIALLLLWIFKKVLKLVVVLIGAVVGYFVGEAVEPSLSLVFAAGFAIVGIWAMSGDKSKKKGKKQRSILKDADDWDDDSWDDEGDWDE</sequence>
<gene>
    <name type="ordered locus">AF_1991</name>
</gene>
<protein>
    <recommendedName>
        <fullName>Uncharacterized protein AF_1991</fullName>
    </recommendedName>
</protein>
<feature type="chain" id="PRO_0000128080" description="Uncharacterized protein AF_1991">
    <location>
        <begin position="1"/>
        <end position="118"/>
    </location>
</feature>
<feature type="transmembrane region" description="Helical" evidence="1">
    <location>
        <begin position="20"/>
        <end position="39"/>
    </location>
</feature>
<feature type="transmembrane region" description="Helical" evidence="1">
    <location>
        <begin position="46"/>
        <end position="63"/>
    </location>
</feature>
<feature type="transmembrane region" description="Helical" evidence="1">
    <location>
        <begin position="67"/>
        <end position="85"/>
    </location>
</feature>
<feature type="region of interest" description="Disordered" evidence="2">
    <location>
        <begin position="85"/>
        <end position="118"/>
    </location>
</feature>
<feature type="compositionally biased region" description="Basic residues" evidence="2">
    <location>
        <begin position="88"/>
        <end position="97"/>
    </location>
</feature>
<feature type="compositionally biased region" description="Acidic residues" evidence="2">
    <location>
        <begin position="103"/>
        <end position="118"/>
    </location>
</feature>
<organism>
    <name type="scientific">Archaeoglobus fulgidus (strain ATCC 49558 / DSM 4304 / JCM 9628 / NBRC 100126 / VC-16)</name>
    <dbReference type="NCBI Taxonomy" id="224325"/>
    <lineage>
        <taxon>Archaea</taxon>
        <taxon>Methanobacteriati</taxon>
        <taxon>Methanobacteriota</taxon>
        <taxon>Archaeoglobi</taxon>
        <taxon>Archaeoglobales</taxon>
        <taxon>Archaeoglobaceae</taxon>
        <taxon>Archaeoglobus</taxon>
    </lineage>
</organism>
<name>Y1991_ARCFU</name>
<reference key="1">
    <citation type="journal article" date="1997" name="Nature">
        <title>The complete genome sequence of the hyperthermophilic, sulphate-reducing archaeon Archaeoglobus fulgidus.</title>
        <authorList>
            <person name="Klenk H.-P."/>
            <person name="Clayton R.A."/>
            <person name="Tomb J.-F."/>
            <person name="White O."/>
            <person name="Nelson K.E."/>
            <person name="Ketchum K.A."/>
            <person name="Dodson R.J."/>
            <person name="Gwinn M.L."/>
            <person name="Hickey E.K."/>
            <person name="Peterson J.D."/>
            <person name="Richardson D.L."/>
            <person name="Kerlavage A.R."/>
            <person name="Graham D.E."/>
            <person name="Kyrpides N.C."/>
            <person name="Fleischmann R.D."/>
            <person name="Quackenbush J."/>
            <person name="Lee N.H."/>
            <person name="Sutton G.G."/>
            <person name="Gill S.R."/>
            <person name="Kirkness E.F."/>
            <person name="Dougherty B.A."/>
            <person name="McKenney K."/>
            <person name="Adams M.D."/>
            <person name="Loftus B.J."/>
            <person name="Peterson S.N."/>
            <person name="Reich C.I."/>
            <person name="McNeil L.K."/>
            <person name="Badger J.H."/>
            <person name="Glodek A."/>
            <person name="Zhou L."/>
            <person name="Overbeek R."/>
            <person name="Gocayne J.D."/>
            <person name="Weidman J.F."/>
            <person name="McDonald L.A."/>
            <person name="Utterback T.R."/>
            <person name="Cotton M.D."/>
            <person name="Spriggs T."/>
            <person name="Artiach P."/>
            <person name="Kaine B.P."/>
            <person name="Sykes S.M."/>
            <person name="Sadow P.W."/>
            <person name="D'Andrea K.P."/>
            <person name="Bowman C."/>
            <person name="Fujii C."/>
            <person name="Garland S.A."/>
            <person name="Mason T.M."/>
            <person name="Olsen G.J."/>
            <person name="Fraser C.M."/>
            <person name="Smith H.O."/>
            <person name="Woese C.R."/>
            <person name="Venter J.C."/>
        </authorList>
    </citation>
    <scope>NUCLEOTIDE SEQUENCE [LARGE SCALE GENOMIC DNA]</scope>
    <source>
        <strain>ATCC 49558 / DSM 4304 / JCM 9628 / NBRC 100126 / VC-16</strain>
    </source>
</reference>
<comment type="subcellular location">
    <subcellularLocation>
        <location evidence="3">Cell membrane</location>
        <topology evidence="3">Multi-pass membrane protein</topology>
    </subcellularLocation>
</comment>
<dbReference type="EMBL" id="AE000782">
    <property type="protein sequence ID" value="AAB89266.1"/>
    <property type="molecule type" value="Genomic_DNA"/>
</dbReference>
<dbReference type="PIR" id="F69498">
    <property type="entry name" value="F69498"/>
</dbReference>
<dbReference type="RefSeq" id="WP_010879483.1">
    <property type="nucleotide sequence ID" value="NC_000917.1"/>
</dbReference>
<dbReference type="SMR" id="O28288"/>
<dbReference type="STRING" id="224325.AF_1991"/>
<dbReference type="PaxDb" id="224325-AF_1991"/>
<dbReference type="EnsemblBacteria" id="AAB89266">
    <property type="protein sequence ID" value="AAB89266"/>
    <property type="gene ID" value="AF_1991"/>
</dbReference>
<dbReference type="KEGG" id="afu:AF_1991"/>
<dbReference type="eggNOG" id="ENOG502N5B0">
    <property type="taxonomic scope" value="Archaea"/>
</dbReference>
<dbReference type="HOGENOM" id="CLU_2067658_0_0_2"/>
<dbReference type="Proteomes" id="UP000002199">
    <property type="component" value="Chromosome"/>
</dbReference>
<dbReference type="GO" id="GO:0005886">
    <property type="term" value="C:plasma membrane"/>
    <property type="evidence" value="ECO:0007669"/>
    <property type="project" value="UniProtKB-SubCell"/>
</dbReference>
<accession>O28288</accession>
<proteinExistence type="predicted"/>
<evidence type="ECO:0000255" key="1"/>
<evidence type="ECO:0000256" key="2">
    <source>
        <dbReference type="SAM" id="MobiDB-lite"/>
    </source>
</evidence>
<evidence type="ECO:0000305" key="3"/>
<keyword id="KW-1003">Cell membrane</keyword>
<keyword id="KW-0472">Membrane</keyword>
<keyword id="KW-1185">Reference proteome</keyword>
<keyword id="KW-0812">Transmembrane</keyword>
<keyword id="KW-1133">Transmembrane helix</keyword>